<comment type="subunit">
    <text evidence="1">Part of the 50S ribosomal subunit.</text>
</comment>
<comment type="subcellular location">
    <subcellularLocation>
        <location>Plastid</location>
        <location>Chloroplast</location>
    </subcellularLocation>
</comment>
<comment type="similarity">
    <text evidence="1">Belongs to the universal ribosomal protein uL16 family.</text>
</comment>
<sequence length="135" mass="15350">MLSPKRTRFRKQHRGRMKGISYRGNYICFGRYALQALEPAWITSRQIEAGRRAMTRYARRGGKIWVRIFPDKPVTVRPTETRMGSGKGSPEYWVSVVKPGRILYEMGGVSETVARAAIEIAACKMPIRTQFVIAG</sequence>
<organism>
    <name type="scientific">Drimys granadensis</name>
    <dbReference type="NCBI Taxonomy" id="224735"/>
    <lineage>
        <taxon>Eukaryota</taxon>
        <taxon>Viridiplantae</taxon>
        <taxon>Streptophyta</taxon>
        <taxon>Embryophyta</taxon>
        <taxon>Tracheophyta</taxon>
        <taxon>Spermatophyta</taxon>
        <taxon>Magnoliopsida</taxon>
        <taxon>Magnoliidae</taxon>
        <taxon>Canellales</taxon>
        <taxon>Winteraceae</taxon>
        <taxon>Drimys</taxon>
    </lineage>
</organism>
<name>RK16_DRIGR</name>
<geneLocation type="chloroplast"/>
<protein>
    <recommendedName>
        <fullName evidence="1">Large ribosomal subunit protein uL16c</fullName>
    </recommendedName>
    <alternativeName>
        <fullName evidence="2">50S ribosomal protein L16, chloroplastic</fullName>
    </alternativeName>
</protein>
<proteinExistence type="inferred from homology"/>
<keyword id="KW-0150">Chloroplast</keyword>
<keyword id="KW-0934">Plastid</keyword>
<keyword id="KW-0687">Ribonucleoprotein</keyword>
<keyword id="KW-0689">Ribosomal protein</keyword>
<feature type="chain" id="PRO_0000276382" description="Large ribosomal subunit protein uL16c">
    <location>
        <begin position="1"/>
        <end position="135"/>
    </location>
</feature>
<evidence type="ECO:0000255" key="1">
    <source>
        <dbReference type="HAMAP-Rule" id="MF_01342"/>
    </source>
</evidence>
<evidence type="ECO:0000305" key="2"/>
<dbReference type="EMBL" id="DQ887676">
    <property type="protein sequence ID" value="ABH88334.1"/>
    <property type="molecule type" value="Genomic_DNA"/>
</dbReference>
<dbReference type="RefSeq" id="YP_784424.1">
    <property type="nucleotide sequence ID" value="NC_008456.1"/>
</dbReference>
<dbReference type="SMR" id="Q06GV9"/>
<dbReference type="GeneID" id="4363610"/>
<dbReference type="GO" id="GO:0009507">
    <property type="term" value="C:chloroplast"/>
    <property type="evidence" value="ECO:0007669"/>
    <property type="project" value="UniProtKB-SubCell"/>
</dbReference>
<dbReference type="GO" id="GO:0005762">
    <property type="term" value="C:mitochondrial large ribosomal subunit"/>
    <property type="evidence" value="ECO:0007669"/>
    <property type="project" value="TreeGrafter"/>
</dbReference>
<dbReference type="GO" id="GO:0019843">
    <property type="term" value="F:rRNA binding"/>
    <property type="evidence" value="ECO:0007669"/>
    <property type="project" value="InterPro"/>
</dbReference>
<dbReference type="GO" id="GO:0003735">
    <property type="term" value="F:structural constituent of ribosome"/>
    <property type="evidence" value="ECO:0007669"/>
    <property type="project" value="InterPro"/>
</dbReference>
<dbReference type="GO" id="GO:0032543">
    <property type="term" value="P:mitochondrial translation"/>
    <property type="evidence" value="ECO:0007669"/>
    <property type="project" value="TreeGrafter"/>
</dbReference>
<dbReference type="CDD" id="cd01433">
    <property type="entry name" value="Ribosomal_L16_L10e"/>
    <property type="match status" value="1"/>
</dbReference>
<dbReference type="FunFam" id="3.90.1170.10:FF:000001">
    <property type="entry name" value="50S ribosomal protein L16"/>
    <property type="match status" value="1"/>
</dbReference>
<dbReference type="Gene3D" id="3.90.1170.10">
    <property type="entry name" value="Ribosomal protein L10e/L16"/>
    <property type="match status" value="1"/>
</dbReference>
<dbReference type="HAMAP" id="MF_01342">
    <property type="entry name" value="Ribosomal_uL16"/>
    <property type="match status" value="1"/>
</dbReference>
<dbReference type="InterPro" id="IPR047873">
    <property type="entry name" value="Ribosomal_uL16"/>
</dbReference>
<dbReference type="InterPro" id="IPR000114">
    <property type="entry name" value="Ribosomal_uL16_bact-type"/>
</dbReference>
<dbReference type="InterPro" id="IPR020798">
    <property type="entry name" value="Ribosomal_uL16_CS"/>
</dbReference>
<dbReference type="InterPro" id="IPR016180">
    <property type="entry name" value="Ribosomal_uL16_dom"/>
</dbReference>
<dbReference type="InterPro" id="IPR036920">
    <property type="entry name" value="Ribosomal_uL16_sf"/>
</dbReference>
<dbReference type="NCBIfam" id="TIGR01164">
    <property type="entry name" value="rplP_bact"/>
    <property type="match status" value="1"/>
</dbReference>
<dbReference type="PANTHER" id="PTHR12220">
    <property type="entry name" value="50S/60S RIBOSOMAL PROTEIN L16"/>
    <property type="match status" value="1"/>
</dbReference>
<dbReference type="PANTHER" id="PTHR12220:SF13">
    <property type="entry name" value="LARGE RIBOSOMAL SUBUNIT PROTEIN UL16M"/>
    <property type="match status" value="1"/>
</dbReference>
<dbReference type="Pfam" id="PF00252">
    <property type="entry name" value="Ribosomal_L16"/>
    <property type="match status" value="1"/>
</dbReference>
<dbReference type="PRINTS" id="PR00060">
    <property type="entry name" value="RIBOSOMALL16"/>
</dbReference>
<dbReference type="SUPFAM" id="SSF54686">
    <property type="entry name" value="Ribosomal protein L16p/L10e"/>
    <property type="match status" value="1"/>
</dbReference>
<dbReference type="PROSITE" id="PS00586">
    <property type="entry name" value="RIBOSOMAL_L16_1"/>
    <property type="match status" value="1"/>
</dbReference>
<dbReference type="PROSITE" id="PS00701">
    <property type="entry name" value="RIBOSOMAL_L16_2"/>
    <property type="match status" value="1"/>
</dbReference>
<accession>Q06GV9</accession>
<reference key="1">
    <citation type="journal article" date="2006" name="BMC Evol. Biol.">
        <title>Complete plastid genome sequences of Drimys, Liriodendron, and Piper: implications for the phylogenetic relationships of magnoliids.</title>
        <authorList>
            <person name="Cai Z."/>
            <person name="Penaflor C."/>
            <person name="Kuehl J.V."/>
            <person name="Leebens-Mack J."/>
            <person name="Carlson J.E."/>
            <person name="dePamphilis C.W."/>
            <person name="Boore J.L."/>
            <person name="Jansen R.K."/>
        </authorList>
    </citation>
    <scope>NUCLEOTIDE SEQUENCE [LARGE SCALE GENOMIC DNA]</scope>
</reference>
<gene>
    <name evidence="1" type="primary">rpl16</name>
</gene>